<dbReference type="EMBL" id="CP000887">
    <property type="protein sequence ID" value="ACD72664.1"/>
    <property type="molecule type" value="Genomic_DNA"/>
</dbReference>
<dbReference type="RefSeq" id="WP_002964350.1">
    <property type="nucleotide sequence ID" value="NC_010742.1"/>
</dbReference>
<dbReference type="SMR" id="B2S667"/>
<dbReference type="GeneID" id="97533536"/>
<dbReference type="KEGG" id="bmc:BAbS19_I11590"/>
<dbReference type="HOGENOM" id="CLU_061015_2_1_5"/>
<dbReference type="Proteomes" id="UP000002565">
    <property type="component" value="Chromosome 1"/>
</dbReference>
<dbReference type="GO" id="GO:1990904">
    <property type="term" value="C:ribonucleoprotein complex"/>
    <property type="evidence" value="ECO:0007669"/>
    <property type="project" value="UniProtKB-KW"/>
</dbReference>
<dbReference type="GO" id="GO:0005840">
    <property type="term" value="C:ribosome"/>
    <property type="evidence" value="ECO:0007669"/>
    <property type="project" value="UniProtKB-KW"/>
</dbReference>
<dbReference type="GO" id="GO:0019843">
    <property type="term" value="F:rRNA binding"/>
    <property type="evidence" value="ECO:0007669"/>
    <property type="project" value="UniProtKB-UniRule"/>
</dbReference>
<dbReference type="GO" id="GO:0003735">
    <property type="term" value="F:structural constituent of ribosome"/>
    <property type="evidence" value="ECO:0007669"/>
    <property type="project" value="InterPro"/>
</dbReference>
<dbReference type="GO" id="GO:0000049">
    <property type="term" value="F:tRNA binding"/>
    <property type="evidence" value="ECO:0007669"/>
    <property type="project" value="UniProtKB-UniRule"/>
</dbReference>
<dbReference type="GO" id="GO:0006412">
    <property type="term" value="P:translation"/>
    <property type="evidence" value="ECO:0007669"/>
    <property type="project" value="UniProtKB-UniRule"/>
</dbReference>
<dbReference type="FunFam" id="3.30.1440.10:FF:000001">
    <property type="entry name" value="50S ribosomal protein L5"/>
    <property type="match status" value="1"/>
</dbReference>
<dbReference type="Gene3D" id="3.30.1440.10">
    <property type="match status" value="1"/>
</dbReference>
<dbReference type="HAMAP" id="MF_01333_B">
    <property type="entry name" value="Ribosomal_uL5_B"/>
    <property type="match status" value="1"/>
</dbReference>
<dbReference type="InterPro" id="IPR002132">
    <property type="entry name" value="Ribosomal_uL5"/>
</dbReference>
<dbReference type="InterPro" id="IPR020930">
    <property type="entry name" value="Ribosomal_uL5_bac-type"/>
</dbReference>
<dbReference type="InterPro" id="IPR031309">
    <property type="entry name" value="Ribosomal_uL5_C"/>
</dbReference>
<dbReference type="InterPro" id="IPR020929">
    <property type="entry name" value="Ribosomal_uL5_CS"/>
</dbReference>
<dbReference type="InterPro" id="IPR022803">
    <property type="entry name" value="Ribosomal_uL5_dom_sf"/>
</dbReference>
<dbReference type="InterPro" id="IPR031310">
    <property type="entry name" value="Ribosomal_uL5_N"/>
</dbReference>
<dbReference type="NCBIfam" id="NF000585">
    <property type="entry name" value="PRK00010.1"/>
    <property type="match status" value="1"/>
</dbReference>
<dbReference type="PANTHER" id="PTHR11994">
    <property type="entry name" value="60S RIBOSOMAL PROTEIN L11-RELATED"/>
    <property type="match status" value="1"/>
</dbReference>
<dbReference type="Pfam" id="PF00281">
    <property type="entry name" value="Ribosomal_L5"/>
    <property type="match status" value="1"/>
</dbReference>
<dbReference type="Pfam" id="PF00673">
    <property type="entry name" value="Ribosomal_L5_C"/>
    <property type="match status" value="1"/>
</dbReference>
<dbReference type="PIRSF" id="PIRSF002161">
    <property type="entry name" value="Ribosomal_L5"/>
    <property type="match status" value="1"/>
</dbReference>
<dbReference type="SUPFAM" id="SSF55282">
    <property type="entry name" value="RL5-like"/>
    <property type="match status" value="1"/>
</dbReference>
<dbReference type="PROSITE" id="PS00358">
    <property type="entry name" value="RIBOSOMAL_L5"/>
    <property type="match status" value="1"/>
</dbReference>
<reference key="1">
    <citation type="journal article" date="2008" name="PLoS ONE">
        <title>Genome sequence of Brucella abortus vaccine strain S19 compared to virulent strains yields candidate virulence genes.</title>
        <authorList>
            <person name="Crasta O.R."/>
            <person name="Folkerts O."/>
            <person name="Fei Z."/>
            <person name="Mane S.P."/>
            <person name="Evans C."/>
            <person name="Martino-Catt S."/>
            <person name="Bricker B."/>
            <person name="Yu G."/>
            <person name="Du L."/>
            <person name="Sobral B.W."/>
        </authorList>
    </citation>
    <scope>NUCLEOTIDE SEQUENCE [LARGE SCALE GENOMIC DNA]</scope>
    <source>
        <strain>S19</strain>
    </source>
</reference>
<evidence type="ECO:0000255" key="1">
    <source>
        <dbReference type="HAMAP-Rule" id="MF_01333"/>
    </source>
</evidence>
<evidence type="ECO:0000305" key="2"/>
<accession>B2S667</accession>
<proteinExistence type="inferred from homology"/>
<keyword id="KW-0687">Ribonucleoprotein</keyword>
<keyword id="KW-0689">Ribosomal protein</keyword>
<keyword id="KW-0694">RNA-binding</keyword>
<keyword id="KW-0699">rRNA-binding</keyword>
<keyword id="KW-0820">tRNA-binding</keyword>
<comment type="function">
    <text evidence="1">This is one of the proteins that bind and probably mediate the attachment of the 5S RNA into the large ribosomal subunit, where it forms part of the central protuberance. In the 70S ribosome it contacts protein S13 of the 30S subunit (bridge B1b), connecting the 2 subunits; this bridge is implicated in subunit movement. Contacts the P site tRNA; the 5S rRNA and some of its associated proteins might help stabilize positioning of ribosome-bound tRNAs.</text>
</comment>
<comment type="subunit">
    <text evidence="1">Part of the 50S ribosomal subunit; part of the 5S rRNA/L5/L18/L25 subcomplex. Contacts the 5S rRNA and the P site tRNA. Forms a bridge to the 30S subunit in the 70S ribosome.</text>
</comment>
<comment type="similarity">
    <text evidence="1">Belongs to the universal ribosomal protein uL5 family.</text>
</comment>
<feature type="chain" id="PRO_1000142362" description="Large ribosomal subunit protein uL5">
    <location>
        <begin position="1"/>
        <end position="185"/>
    </location>
</feature>
<organism>
    <name type="scientific">Brucella abortus (strain S19)</name>
    <dbReference type="NCBI Taxonomy" id="430066"/>
    <lineage>
        <taxon>Bacteria</taxon>
        <taxon>Pseudomonadati</taxon>
        <taxon>Pseudomonadota</taxon>
        <taxon>Alphaproteobacteria</taxon>
        <taxon>Hyphomicrobiales</taxon>
        <taxon>Brucellaceae</taxon>
        <taxon>Brucella/Ochrobactrum group</taxon>
        <taxon>Brucella</taxon>
    </lineage>
</organism>
<sequence>MAEAKALPRFKKLYQDNIRKALLEEFKYDNEMQIPRITKVVLNMGVGEATGDSKKPAVAAEDLAMIAGQKAVVTRARNSIATFKLREGMPIGAKVTLRQDRMYEFLDRLITIALPRVRDFRGLNPKSFDGRGNYAMGIKEHIVFPEINYDKVDQIWGMDIIVCTTAKTDDEARSLLRAFNFPFRQ</sequence>
<protein>
    <recommendedName>
        <fullName evidence="1">Large ribosomal subunit protein uL5</fullName>
    </recommendedName>
    <alternativeName>
        <fullName evidence="2">50S ribosomal protein L5</fullName>
    </alternativeName>
</protein>
<gene>
    <name evidence="1" type="primary">rplE</name>
    <name type="ordered locus">BAbS19_I11590</name>
</gene>
<name>RL5_BRUA1</name>